<accession>Q8ECM3</accession>
<proteinExistence type="inferred from homology"/>
<evidence type="ECO:0000255" key="1">
    <source>
        <dbReference type="HAMAP-Rule" id="MF_00168"/>
    </source>
</evidence>
<comment type="function">
    <text evidence="1">Catalyzes the base-exchange of a guanine (G) residue with the queuine precursor 7-aminomethyl-7-deazaguanine (PreQ1) at position 34 (anticodon wobble position) in tRNAs with GU(N) anticodons (tRNA-Asp, -Asn, -His and -Tyr). Catalysis occurs through a double-displacement mechanism. The nucleophile active site attacks the C1' of nucleotide 34 to detach the guanine base from the RNA, forming a covalent enzyme-RNA intermediate. The proton acceptor active site deprotonates the incoming PreQ1, allowing a nucleophilic attack on the C1' of the ribose to form the product. After dissociation, two additional enzymatic reactions on the tRNA convert PreQ1 to queuine (Q), resulting in the hypermodified nucleoside queuosine (7-(((4,5-cis-dihydroxy-2-cyclopenten-1-yl)amino)methyl)-7-deazaguanosine).</text>
</comment>
<comment type="catalytic activity">
    <reaction evidence="1">
        <text>7-aminomethyl-7-carbaguanine + guanosine(34) in tRNA = 7-aminomethyl-7-carbaguanosine(34) in tRNA + guanine</text>
        <dbReference type="Rhea" id="RHEA:24104"/>
        <dbReference type="Rhea" id="RHEA-COMP:10341"/>
        <dbReference type="Rhea" id="RHEA-COMP:10342"/>
        <dbReference type="ChEBI" id="CHEBI:16235"/>
        <dbReference type="ChEBI" id="CHEBI:58703"/>
        <dbReference type="ChEBI" id="CHEBI:74269"/>
        <dbReference type="ChEBI" id="CHEBI:82833"/>
        <dbReference type="EC" id="2.4.2.29"/>
    </reaction>
</comment>
<comment type="cofactor">
    <cofactor evidence="1">
        <name>Zn(2+)</name>
        <dbReference type="ChEBI" id="CHEBI:29105"/>
    </cofactor>
    <text evidence="1">Binds 1 zinc ion per subunit.</text>
</comment>
<comment type="pathway">
    <text evidence="1">tRNA modification; tRNA-queuosine biosynthesis.</text>
</comment>
<comment type="subunit">
    <text evidence="1">Homodimer. Within each dimer, one monomer is responsible for RNA recognition and catalysis, while the other monomer binds to the replacement base PreQ1.</text>
</comment>
<comment type="similarity">
    <text evidence="1">Belongs to the queuine tRNA-ribosyltransferase family.</text>
</comment>
<reference key="1">
    <citation type="journal article" date="2002" name="Nat. Biotechnol.">
        <title>Genome sequence of the dissimilatory metal ion-reducing bacterium Shewanella oneidensis.</title>
        <authorList>
            <person name="Heidelberg J.F."/>
            <person name="Paulsen I.T."/>
            <person name="Nelson K.E."/>
            <person name="Gaidos E.J."/>
            <person name="Nelson W.C."/>
            <person name="Read T.D."/>
            <person name="Eisen J.A."/>
            <person name="Seshadri R."/>
            <person name="Ward N.L."/>
            <person name="Methe B.A."/>
            <person name="Clayton R.A."/>
            <person name="Meyer T."/>
            <person name="Tsapin A."/>
            <person name="Scott J."/>
            <person name="Beanan M.J."/>
            <person name="Brinkac L.M."/>
            <person name="Daugherty S.C."/>
            <person name="DeBoy R.T."/>
            <person name="Dodson R.J."/>
            <person name="Durkin A.S."/>
            <person name="Haft D.H."/>
            <person name="Kolonay J.F."/>
            <person name="Madupu R."/>
            <person name="Peterson J.D."/>
            <person name="Umayam L.A."/>
            <person name="White O."/>
            <person name="Wolf A.M."/>
            <person name="Vamathevan J.J."/>
            <person name="Weidman J.F."/>
            <person name="Impraim M."/>
            <person name="Lee K."/>
            <person name="Berry K.J."/>
            <person name="Lee C."/>
            <person name="Mueller J."/>
            <person name="Khouri H.M."/>
            <person name="Gill J."/>
            <person name="Utterback T.R."/>
            <person name="McDonald L.A."/>
            <person name="Feldblyum T.V."/>
            <person name="Smith H.O."/>
            <person name="Venter J.C."/>
            <person name="Nealson K.H."/>
            <person name="Fraser C.M."/>
        </authorList>
    </citation>
    <scope>NUCLEOTIDE SEQUENCE [LARGE SCALE GENOMIC DNA]</scope>
    <source>
        <strain>ATCC 700550 / JCM 31522 / CIP 106686 / LMG 19005 / NCIMB 14063 / MR-1</strain>
    </source>
</reference>
<gene>
    <name evidence="1" type="primary">tgt</name>
    <name type="ordered locus">SO_3113</name>
</gene>
<name>TGT_SHEON</name>
<feature type="chain" id="PRO_0000135519" description="Queuine tRNA-ribosyltransferase">
    <location>
        <begin position="1"/>
        <end position="374"/>
    </location>
</feature>
<feature type="region of interest" description="RNA binding" evidence="1">
    <location>
        <begin position="245"/>
        <end position="251"/>
    </location>
</feature>
<feature type="region of interest" description="RNA binding; important for wobble base 34 recognition" evidence="1">
    <location>
        <begin position="269"/>
        <end position="273"/>
    </location>
</feature>
<feature type="active site" description="Proton acceptor" evidence="1">
    <location>
        <position position="89"/>
    </location>
</feature>
<feature type="active site" description="Nucleophile" evidence="1">
    <location>
        <position position="264"/>
    </location>
</feature>
<feature type="binding site" evidence="1">
    <location>
        <begin position="89"/>
        <end position="93"/>
    </location>
    <ligand>
        <name>substrate</name>
    </ligand>
</feature>
<feature type="binding site" evidence="1">
    <location>
        <position position="143"/>
    </location>
    <ligand>
        <name>substrate</name>
    </ligand>
</feature>
<feature type="binding site" evidence="1">
    <location>
        <position position="187"/>
    </location>
    <ligand>
        <name>substrate</name>
    </ligand>
</feature>
<feature type="binding site" evidence="1">
    <location>
        <position position="214"/>
    </location>
    <ligand>
        <name>substrate</name>
    </ligand>
</feature>
<feature type="binding site" evidence="1">
    <location>
        <position position="302"/>
    </location>
    <ligand>
        <name>Zn(2+)</name>
        <dbReference type="ChEBI" id="CHEBI:29105"/>
    </ligand>
</feature>
<feature type="binding site" evidence="1">
    <location>
        <position position="304"/>
    </location>
    <ligand>
        <name>Zn(2+)</name>
        <dbReference type="ChEBI" id="CHEBI:29105"/>
    </ligand>
</feature>
<feature type="binding site" evidence="1">
    <location>
        <position position="307"/>
    </location>
    <ligand>
        <name>Zn(2+)</name>
        <dbReference type="ChEBI" id="CHEBI:29105"/>
    </ligand>
</feature>
<feature type="binding site" evidence="1">
    <location>
        <position position="333"/>
    </location>
    <ligand>
        <name>Zn(2+)</name>
        <dbReference type="ChEBI" id="CHEBI:29105"/>
    </ligand>
</feature>
<protein>
    <recommendedName>
        <fullName evidence="1">Queuine tRNA-ribosyltransferase</fullName>
        <ecNumber evidence="1">2.4.2.29</ecNumber>
    </recommendedName>
    <alternativeName>
        <fullName evidence="1">Guanine insertion enzyme</fullName>
    </alternativeName>
    <alternativeName>
        <fullName evidence="1">tRNA-guanine transglycosylase</fullName>
    </alternativeName>
</protein>
<organism>
    <name type="scientific">Shewanella oneidensis (strain ATCC 700550 / JCM 31522 / CIP 106686 / LMG 19005 / NCIMB 14063 / MR-1)</name>
    <dbReference type="NCBI Taxonomy" id="211586"/>
    <lineage>
        <taxon>Bacteria</taxon>
        <taxon>Pseudomonadati</taxon>
        <taxon>Pseudomonadota</taxon>
        <taxon>Gammaproteobacteria</taxon>
        <taxon>Alteromonadales</taxon>
        <taxon>Shewanellaceae</taxon>
        <taxon>Shewanella</taxon>
    </lineage>
</organism>
<keyword id="KW-0328">Glycosyltransferase</keyword>
<keyword id="KW-0479">Metal-binding</keyword>
<keyword id="KW-0671">Queuosine biosynthesis</keyword>
<keyword id="KW-1185">Reference proteome</keyword>
<keyword id="KW-0808">Transferase</keyword>
<keyword id="KW-0819">tRNA processing</keyword>
<keyword id="KW-0862">Zinc</keyword>
<dbReference type="EC" id="2.4.2.29" evidence="1"/>
<dbReference type="EMBL" id="AE014299">
    <property type="protein sequence ID" value="AAN56119.1"/>
    <property type="molecule type" value="Genomic_DNA"/>
</dbReference>
<dbReference type="RefSeq" id="NP_718675.1">
    <property type="nucleotide sequence ID" value="NC_004347.2"/>
</dbReference>
<dbReference type="RefSeq" id="WP_011073009.1">
    <property type="nucleotide sequence ID" value="NC_004347.2"/>
</dbReference>
<dbReference type="SMR" id="Q8ECM3"/>
<dbReference type="STRING" id="211586.SO_3113"/>
<dbReference type="PaxDb" id="211586-SO_3113"/>
<dbReference type="KEGG" id="son:SO_3113"/>
<dbReference type="PATRIC" id="fig|211586.12.peg.3013"/>
<dbReference type="eggNOG" id="COG0343">
    <property type="taxonomic scope" value="Bacteria"/>
</dbReference>
<dbReference type="HOGENOM" id="CLU_022060_0_1_6"/>
<dbReference type="OrthoDB" id="9805417at2"/>
<dbReference type="PhylomeDB" id="Q8ECM3"/>
<dbReference type="BioCyc" id="SONE211586:G1GMP-2884-MONOMER"/>
<dbReference type="UniPathway" id="UPA00392"/>
<dbReference type="Proteomes" id="UP000008186">
    <property type="component" value="Chromosome"/>
</dbReference>
<dbReference type="GO" id="GO:0005737">
    <property type="term" value="C:cytoplasm"/>
    <property type="evidence" value="ECO:0000318"/>
    <property type="project" value="GO_Central"/>
</dbReference>
<dbReference type="GO" id="GO:0005829">
    <property type="term" value="C:cytosol"/>
    <property type="evidence" value="ECO:0000318"/>
    <property type="project" value="GO_Central"/>
</dbReference>
<dbReference type="GO" id="GO:0046872">
    <property type="term" value="F:metal ion binding"/>
    <property type="evidence" value="ECO:0007669"/>
    <property type="project" value="UniProtKB-KW"/>
</dbReference>
<dbReference type="GO" id="GO:0008479">
    <property type="term" value="F:tRNA-guanosine(34) queuine transglycosylase activity"/>
    <property type="evidence" value="ECO:0007669"/>
    <property type="project" value="UniProtKB-UniRule"/>
</dbReference>
<dbReference type="GO" id="GO:0008616">
    <property type="term" value="P:queuosine biosynthetic process"/>
    <property type="evidence" value="ECO:0000318"/>
    <property type="project" value="GO_Central"/>
</dbReference>
<dbReference type="GO" id="GO:0002099">
    <property type="term" value="P:tRNA wobble guanine modification"/>
    <property type="evidence" value="ECO:0000318"/>
    <property type="project" value="GO_Central"/>
</dbReference>
<dbReference type="GO" id="GO:0101030">
    <property type="term" value="P:tRNA-guanine transglycosylation"/>
    <property type="evidence" value="ECO:0007669"/>
    <property type="project" value="InterPro"/>
</dbReference>
<dbReference type="FunFam" id="3.20.20.105:FF:000001">
    <property type="entry name" value="Queuine tRNA-ribosyltransferase"/>
    <property type="match status" value="1"/>
</dbReference>
<dbReference type="Gene3D" id="3.20.20.105">
    <property type="entry name" value="Queuine tRNA-ribosyltransferase-like"/>
    <property type="match status" value="1"/>
</dbReference>
<dbReference type="HAMAP" id="MF_00168">
    <property type="entry name" value="Q_tRNA_Tgt"/>
    <property type="match status" value="1"/>
</dbReference>
<dbReference type="InterPro" id="IPR050076">
    <property type="entry name" value="ArchSynthase1/Queuine_TRR"/>
</dbReference>
<dbReference type="InterPro" id="IPR004803">
    <property type="entry name" value="TGT"/>
</dbReference>
<dbReference type="InterPro" id="IPR036511">
    <property type="entry name" value="TGT-like_sf"/>
</dbReference>
<dbReference type="InterPro" id="IPR002616">
    <property type="entry name" value="tRNA_ribo_trans-like"/>
</dbReference>
<dbReference type="NCBIfam" id="TIGR00430">
    <property type="entry name" value="Q_tRNA_tgt"/>
    <property type="match status" value="1"/>
</dbReference>
<dbReference type="NCBIfam" id="TIGR00449">
    <property type="entry name" value="tgt_general"/>
    <property type="match status" value="1"/>
</dbReference>
<dbReference type="PANTHER" id="PTHR46499">
    <property type="entry name" value="QUEUINE TRNA-RIBOSYLTRANSFERASE"/>
    <property type="match status" value="1"/>
</dbReference>
<dbReference type="PANTHER" id="PTHR46499:SF1">
    <property type="entry name" value="QUEUINE TRNA-RIBOSYLTRANSFERASE"/>
    <property type="match status" value="1"/>
</dbReference>
<dbReference type="Pfam" id="PF01702">
    <property type="entry name" value="TGT"/>
    <property type="match status" value="1"/>
</dbReference>
<dbReference type="SUPFAM" id="SSF51713">
    <property type="entry name" value="tRNA-guanine transglycosylase"/>
    <property type="match status" value="1"/>
</dbReference>
<sequence length="374" mass="42578">MKFELDTTDGRARRGRLIFDRGTVETPAFMPVGTYGTVKGMTPEEVRATGADILLGNTFHLWLRPGEEIMRKHGDLHDFMNWQRPILTDSGGFQVFSLGDIRKITEEGVHFRSPINGEKIFLDPEKSMQIQHALGSDVVMIFDECTPYPATEDEARKSMQMSLRWAKRSRDEFDRLENPNSLFGIIQGSVYEDLRDESLKGLVEIGFDGYAVGGLAVGEPKEDMHRILEHVCPQILADKPRYLMGVGKPEDLVEGVRRGIDMFDCVMPTRNARNGHLFTSEGVIKIRNARHRDDTSPLDPKCDCYTCKNYSRAYLYHLDRCNEILGARLNTIHNLRYYQMLMEGLRGAIETGTLDAFVKDFYTSQGREVPELVD</sequence>